<feature type="chain" id="PRO_0000272182" description="PTS system MurNAc-GlcNAc-specific EIIBC component">
    <location>
        <begin position="1"/>
        <end position="474"/>
    </location>
</feature>
<feature type="transmembrane region" description="Helical" evidence="3">
    <location>
        <begin position="129"/>
        <end position="149"/>
    </location>
</feature>
<feature type="transmembrane region" description="Helical" evidence="3">
    <location>
        <begin position="167"/>
        <end position="187"/>
    </location>
</feature>
<feature type="transmembrane region" description="Helical" evidence="3">
    <location>
        <begin position="193"/>
        <end position="213"/>
    </location>
</feature>
<feature type="transmembrane region" description="Helical" evidence="3">
    <location>
        <begin position="228"/>
        <end position="248"/>
    </location>
</feature>
<feature type="transmembrane region" description="Helical" evidence="3">
    <location>
        <begin position="268"/>
        <end position="288"/>
    </location>
</feature>
<feature type="transmembrane region" description="Helical" evidence="3">
    <location>
        <begin position="299"/>
        <end position="319"/>
    </location>
</feature>
<feature type="transmembrane region" description="Helical" evidence="3">
    <location>
        <begin position="343"/>
        <end position="363"/>
    </location>
</feature>
<feature type="transmembrane region" description="Helical" evidence="3">
    <location>
        <begin position="378"/>
        <end position="398"/>
    </location>
</feature>
<feature type="transmembrane region" description="Helical" evidence="3">
    <location>
        <begin position="402"/>
        <end position="422"/>
    </location>
</feature>
<feature type="transmembrane region" description="Helical" evidence="3">
    <location>
        <begin position="444"/>
        <end position="464"/>
    </location>
</feature>
<feature type="domain" description="PTS EIIB type-1" evidence="2">
    <location>
        <begin position="5"/>
        <end position="87"/>
    </location>
</feature>
<feature type="domain" description="PTS EIIC type-1" evidence="3">
    <location>
        <begin position="124"/>
        <end position="474"/>
    </location>
</feature>
<feature type="active site" description="Phosphocysteine intermediate; for EIIB activity" evidence="2">
    <location>
        <position position="27"/>
    </location>
</feature>
<organism>
    <name type="scientific">Staphylococcus epidermidis (strain ATCC 12228 / FDA PCI 1200)</name>
    <dbReference type="NCBI Taxonomy" id="176280"/>
    <lineage>
        <taxon>Bacteria</taxon>
        <taxon>Bacillati</taxon>
        <taxon>Bacillota</taxon>
        <taxon>Bacilli</taxon>
        <taxon>Bacillales</taxon>
        <taxon>Staphylococcaceae</taxon>
        <taxon>Staphylococcus</taxon>
    </lineage>
</organism>
<evidence type="ECO:0000250" key="1">
    <source>
        <dbReference type="UniProtKB" id="Q2FK70"/>
    </source>
</evidence>
<evidence type="ECO:0000255" key="2">
    <source>
        <dbReference type="PROSITE-ProRule" id="PRU00421"/>
    </source>
</evidence>
<evidence type="ECO:0000255" key="3">
    <source>
        <dbReference type="PROSITE-ProRule" id="PRU00426"/>
    </source>
</evidence>
<reference key="1">
    <citation type="journal article" date="2003" name="Mol. Microbiol.">
        <title>Genome-based analysis of virulence genes in a non-biofilm-forming Staphylococcus epidermidis strain (ATCC 12228).</title>
        <authorList>
            <person name="Zhang Y.-Q."/>
            <person name="Ren S.-X."/>
            <person name="Li H.-L."/>
            <person name="Wang Y.-X."/>
            <person name="Fu G."/>
            <person name="Yang J."/>
            <person name="Qin Z.-Q."/>
            <person name="Miao Y.-G."/>
            <person name="Wang W.-Y."/>
            <person name="Chen R.-S."/>
            <person name="Shen Y."/>
            <person name="Chen Z."/>
            <person name="Yuan Z.-H."/>
            <person name="Zhao G.-P."/>
            <person name="Qu D."/>
            <person name="Danchin A."/>
            <person name="Wen Y.-M."/>
        </authorList>
    </citation>
    <scope>NUCLEOTIDE SEQUENCE [LARGE SCALE GENOMIC DNA]</scope>
    <source>
        <strain>ATCC 12228 / FDA PCI 1200</strain>
    </source>
</reference>
<dbReference type="EC" id="2.7.1.-" evidence="1"/>
<dbReference type="EMBL" id="AE015929">
    <property type="protein sequence ID" value="AAO05531.1"/>
    <property type="molecule type" value="Genomic_DNA"/>
</dbReference>
<dbReference type="RefSeq" id="NP_765445.1">
    <property type="nucleotide sequence ID" value="NC_004461.1"/>
</dbReference>
<dbReference type="RefSeq" id="WP_001830059.1">
    <property type="nucleotide sequence ID" value="NZ_WBME01000032.1"/>
</dbReference>
<dbReference type="SMR" id="Q8CNB2"/>
<dbReference type="KEGG" id="sep:SE_1890"/>
<dbReference type="PATRIC" id="fig|176280.10.peg.1847"/>
<dbReference type="eggNOG" id="COG1263">
    <property type="taxonomic scope" value="Bacteria"/>
</dbReference>
<dbReference type="eggNOG" id="COG1264">
    <property type="taxonomic scope" value="Bacteria"/>
</dbReference>
<dbReference type="HOGENOM" id="CLU_012312_2_0_9"/>
<dbReference type="OrthoDB" id="9769191at2"/>
<dbReference type="UniPathway" id="UPA00544"/>
<dbReference type="Proteomes" id="UP000001411">
    <property type="component" value="Chromosome"/>
</dbReference>
<dbReference type="GO" id="GO:0005886">
    <property type="term" value="C:plasma membrane"/>
    <property type="evidence" value="ECO:0007669"/>
    <property type="project" value="UniProtKB-SubCell"/>
</dbReference>
<dbReference type="GO" id="GO:0016301">
    <property type="term" value="F:kinase activity"/>
    <property type="evidence" value="ECO:0007669"/>
    <property type="project" value="UniProtKB-KW"/>
</dbReference>
<dbReference type="GO" id="GO:0008982">
    <property type="term" value="F:protein-N(PI)-phosphohistidine-sugar phosphotransferase activity"/>
    <property type="evidence" value="ECO:0007669"/>
    <property type="project" value="InterPro"/>
</dbReference>
<dbReference type="GO" id="GO:0090588">
    <property type="term" value="F:protein-phosphocysteine-N-acetylmuramate phosphotransferase system transporter activity"/>
    <property type="evidence" value="ECO:0007669"/>
    <property type="project" value="TreeGrafter"/>
</dbReference>
<dbReference type="GO" id="GO:0009254">
    <property type="term" value="P:peptidoglycan turnover"/>
    <property type="evidence" value="ECO:0007669"/>
    <property type="project" value="UniProtKB-UniPathway"/>
</dbReference>
<dbReference type="GO" id="GO:0009401">
    <property type="term" value="P:phosphoenolpyruvate-dependent sugar phosphotransferase system"/>
    <property type="evidence" value="ECO:0007669"/>
    <property type="project" value="UniProtKB-KW"/>
</dbReference>
<dbReference type="CDD" id="cd00212">
    <property type="entry name" value="PTS_IIB_glc"/>
    <property type="match status" value="1"/>
</dbReference>
<dbReference type="FunFam" id="3.30.1360.60:FF:000001">
    <property type="entry name" value="PTS system glucose-specific IIBC component PtsG"/>
    <property type="match status" value="1"/>
</dbReference>
<dbReference type="Gene3D" id="3.30.1360.60">
    <property type="entry name" value="Glucose permease domain IIB"/>
    <property type="match status" value="1"/>
</dbReference>
<dbReference type="InterPro" id="IPR036878">
    <property type="entry name" value="Glu_permease_IIB"/>
</dbReference>
<dbReference type="InterPro" id="IPR018113">
    <property type="entry name" value="PTrfase_EIIB_Cys"/>
</dbReference>
<dbReference type="InterPro" id="IPR003352">
    <property type="entry name" value="PTS_EIIC"/>
</dbReference>
<dbReference type="InterPro" id="IPR013013">
    <property type="entry name" value="PTS_EIIC_1"/>
</dbReference>
<dbReference type="InterPro" id="IPR001996">
    <property type="entry name" value="PTS_IIB_1"/>
</dbReference>
<dbReference type="InterPro" id="IPR050558">
    <property type="entry name" value="PTS_Sugar-Specific_Components"/>
</dbReference>
<dbReference type="PANTHER" id="PTHR30175">
    <property type="entry name" value="PHOSPHOTRANSFERASE SYSTEM TRANSPORT PROTEIN"/>
    <property type="match status" value="1"/>
</dbReference>
<dbReference type="PANTHER" id="PTHR30175:SF3">
    <property type="entry name" value="PTS SYSTEM N-ACETYLMURAMIC ACID-SPECIFIC EIIBC COMPONENT"/>
    <property type="match status" value="1"/>
</dbReference>
<dbReference type="Pfam" id="PF00367">
    <property type="entry name" value="PTS_EIIB"/>
    <property type="match status" value="1"/>
</dbReference>
<dbReference type="Pfam" id="PF02378">
    <property type="entry name" value="PTS_EIIC"/>
    <property type="match status" value="1"/>
</dbReference>
<dbReference type="SUPFAM" id="SSF55604">
    <property type="entry name" value="Glucose permease domain IIB"/>
    <property type="match status" value="1"/>
</dbReference>
<dbReference type="PROSITE" id="PS51098">
    <property type="entry name" value="PTS_EIIB_TYPE_1"/>
    <property type="match status" value="1"/>
</dbReference>
<dbReference type="PROSITE" id="PS01035">
    <property type="entry name" value="PTS_EIIB_TYPE_1_CYS"/>
    <property type="match status" value="1"/>
</dbReference>
<dbReference type="PROSITE" id="PS51103">
    <property type="entry name" value="PTS_EIIC_TYPE_1"/>
    <property type="match status" value="1"/>
</dbReference>
<gene>
    <name type="ordered locus">SE_1890</name>
</gene>
<keyword id="KW-1003">Cell membrane</keyword>
<keyword id="KW-0418">Kinase</keyword>
<keyword id="KW-0472">Membrane</keyword>
<keyword id="KW-0598">Phosphotransferase system</keyword>
<keyword id="KW-0762">Sugar transport</keyword>
<keyword id="KW-0808">Transferase</keyword>
<keyword id="KW-0812">Transmembrane</keyword>
<keyword id="KW-1133">Transmembrane helix</keyword>
<keyword id="KW-0813">Transport</keyword>
<sequence>MSKEERLAKDITHALGGSQNISNIIHCMTRVRIKVHNDAKVNYDELKSINGVLGVVEDERIQVVVGPGIVNKVAKLMADQSGATLAEETTENQSYKSQAEKRAYEHKKQFQSQRKQSKWNKVLKSIANIFIPLIPAFIGAGLIGGIAAILSNLLTAGSISGQWIQQIVTVLNVIKDGMLFYLAIFTGINSAKVFGATPGLGGVIGGTTLLTGITDENPIKNIFTGEHLAAGQGGIIGVIFAVWLLSMVEKRLHKIIPNSIDIIVTPTITLLLIGLLTIFIIMPLAGFVSDGLVYVINWIIGVGGIFSGFIIGAFFLPLVMLGLHHIFTPIHIELINQTGSTYLLPIAAMAGAGQVGAAIALWVRCGKNKELRNTLKGALPVGFLGIGEPLIYGVTLPLGRPFFTACIGGGVGGAVIGGIGHIGATAVGPSGISLLPLIANNMYLGYIVGLLAAYAGGFIFTYFFGTTKEMRNPE</sequence>
<comment type="function">
    <text evidence="1">The phosphoenolpyruvate-dependent sugar phosphotransferase system (sugar PTS), a major carbohydrate active transport system, catalyzes the phosphorylation of incoming sugar substrates concomitantly with their translocation across the cell membrane. This system is involved in the uptake and phosphorylation of MurNAc-GlcNAc, the principle peptidoglycan turnover product of S.aureus, yielding cytoplasmic MurNAc 6P-GlcNAc.</text>
</comment>
<comment type="catalytic activity">
    <reaction evidence="1">
        <text>N-acetyl-beta-D-muramate-(1-&gt;4)-N-acetyl-D-glucosamine(out) + N(pros)-phospho-L-histidyl-[protein] = 6-phospho-N-acetyl-beta-D-muramate-(1-&gt;4)-N-acetyl-D-glucosamine(in) + L-histidyl-[protein]</text>
        <dbReference type="Rhea" id="RHEA:66784"/>
        <dbReference type="Rhea" id="RHEA-COMP:9745"/>
        <dbReference type="Rhea" id="RHEA-COMP:9746"/>
        <dbReference type="ChEBI" id="CHEBI:29979"/>
        <dbReference type="ChEBI" id="CHEBI:64837"/>
        <dbReference type="ChEBI" id="CHEBI:167476"/>
        <dbReference type="ChEBI" id="CHEBI:167477"/>
    </reaction>
    <physiologicalReaction direction="left-to-right" evidence="1">
        <dbReference type="Rhea" id="RHEA:66785"/>
    </physiologicalReaction>
</comment>
<comment type="pathway">
    <text evidence="1">Cell wall biogenesis; peptidoglycan recycling.</text>
</comment>
<comment type="subcellular location">
    <subcellularLocation>
        <location evidence="3">Cell membrane</location>
        <topology evidence="3">Multi-pass membrane protein</topology>
    </subcellularLocation>
</comment>
<comment type="domain">
    <text>The EIIB domain is phosphorylated by phospho-EIIA on a cysteinyl or histidyl residue, depending on the transported sugar. Then, it transfers the phosphoryl group to the sugar substrate concomitantly with the sugar uptake processed by the EIIC domain.</text>
</comment>
<comment type="domain">
    <text>The EIIC domain forms the PTS system translocation channel and contains the specific substrate-binding site.</text>
</comment>
<name>PTXBC_STAES</name>
<accession>Q8CNB2</accession>
<proteinExistence type="inferred from homology"/>
<protein>
    <recommendedName>
        <fullName evidence="1">PTS system MurNAc-GlcNAc-specific EIIBC component</fullName>
    </recommendedName>
    <domain>
        <recommendedName>
            <fullName>MurNAc-GlcNAc-specific phosphotransferase enzyme IIB component</fullName>
            <ecNumber evidence="1">2.7.1.-</ecNumber>
        </recommendedName>
        <alternativeName>
            <fullName>PTS system MurNAc-GlcNAc-specific EIIB component</fullName>
        </alternativeName>
    </domain>
    <domain>
        <recommendedName>
            <fullName>MurNAc-GlcNAc permease IIC component</fullName>
        </recommendedName>
        <alternativeName>
            <fullName>PTS system MurNAc-GlcNAc-specific EIIC component</fullName>
        </alternativeName>
    </domain>
</protein>